<accession>P0CZ48</accession>
<accession>P63444</accession>
<accession>Q99YD3</accession>
<sequence>MAVFEKVQEIIVEELGKETEEVTLETTFDDLDADSLDVFQVISEIEDAFDIQIETEEGLNTVGDLVAYVEEKSK</sequence>
<comment type="function">
    <text evidence="1">Carrier of the growing fatty acid chain in fatty acid biosynthesis.</text>
</comment>
<comment type="pathway">
    <text evidence="1">Lipid metabolism; fatty acid biosynthesis.</text>
</comment>
<comment type="subcellular location">
    <subcellularLocation>
        <location evidence="1">Cytoplasm</location>
    </subcellularLocation>
</comment>
<comment type="PTM">
    <text evidence="1">4'-phosphopantetheine is transferred from CoA to a specific serine of apo-ACP by AcpS. This modification is essential for activity because fatty acids are bound in thioester linkage to the sulfhydryl of the prosthetic group.</text>
</comment>
<comment type="similarity">
    <text evidence="1">Belongs to the acyl carrier protein (ACP) family.</text>
</comment>
<protein>
    <recommendedName>
        <fullName evidence="1">Acyl carrier protein</fullName>
        <shortName evidence="1">ACP</shortName>
    </recommendedName>
</protein>
<feature type="chain" id="PRO_0000180202" description="Acyl carrier protein">
    <location>
        <begin position="1"/>
        <end position="74"/>
    </location>
</feature>
<feature type="domain" description="Carrier" evidence="2">
    <location>
        <begin position="1"/>
        <end position="73"/>
    </location>
</feature>
<feature type="modified residue" description="O-(pantetheine 4'-phosphoryl)serine" evidence="2">
    <location>
        <position position="35"/>
    </location>
</feature>
<evidence type="ECO:0000255" key="1">
    <source>
        <dbReference type="HAMAP-Rule" id="MF_01217"/>
    </source>
</evidence>
<evidence type="ECO:0000255" key="2">
    <source>
        <dbReference type="PROSITE-ProRule" id="PRU00258"/>
    </source>
</evidence>
<dbReference type="EMBL" id="AE014074">
    <property type="protein sequence ID" value="AAM80133.1"/>
    <property type="molecule type" value="Genomic_DNA"/>
</dbReference>
<dbReference type="RefSeq" id="WP_002983328.1">
    <property type="nucleotide sequence ID" value="NC_004070.1"/>
</dbReference>
<dbReference type="SMR" id="P0CZ48"/>
<dbReference type="KEGG" id="spg:SpyM3_1526"/>
<dbReference type="HOGENOM" id="CLU_108696_5_0_9"/>
<dbReference type="UniPathway" id="UPA00094"/>
<dbReference type="Proteomes" id="UP000000564">
    <property type="component" value="Chromosome"/>
</dbReference>
<dbReference type="GO" id="GO:0005829">
    <property type="term" value="C:cytosol"/>
    <property type="evidence" value="ECO:0007669"/>
    <property type="project" value="TreeGrafter"/>
</dbReference>
<dbReference type="GO" id="GO:0016020">
    <property type="term" value="C:membrane"/>
    <property type="evidence" value="ECO:0007669"/>
    <property type="project" value="GOC"/>
</dbReference>
<dbReference type="GO" id="GO:0000035">
    <property type="term" value="F:acyl binding"/>
    <property type="evidence" value="ECO:0007669"/>
    <property type="project" value="TreeGrafter"/>
</dbReference>
<dbReference type="GO" id="GO:0000036">
    <property type="term" value="F:acyl carrier activity"/>
    <property type="evidence" value="ECO:0007669"/>
    <property type="project" value="UniProtKB-UniRule"/>
</dbReference>
<dbReference type="GO" id="GO:0009245">
    <property type="term" value="P:lipid A biosynthetic process"/>
    <property type="evidence" value="ECO:0007669"/>
    <property type="project" value="TreeGrafter"/>
</dbReference>
<dbReference type="Gene3D" id="1.10.1200.10">
    <property type="entry name" value="ACP-like"/>
    <property type="match status" value="1"/>
</dbReference>
<dbReference type="HAMAP" id="MF_01217">
    <property type="entry name" value="Acyl_carrier"/>
    <property type="match status" value="1"/>
</dbReference>
<dbReference type="InterPro" id="IPR003231">
    <property type="entry name" value="ACP"/>
</dbReference>
<dbReference type="InterPro" id="IPR036736">
    <property type="entry name" value="ACP-like_sf"/>
</dbReference>
<dbReference type="InterPro" id="IPR009081">
    <property type="entry name" value="PP-bd_ACP"/>
</dbReference>
<dbReference type="NCBIfam" id="NF002148">
    <property type="entry name" value="PRK00982.1-2"/>
    <property type="match status" value="1"/>
</dbReference>
<dbReference type="NCBIfam" id="NF002150">
    <property type="entry name" value="PRK00982.1-4"/>
    <property type="match status" value="1"/>
</dbReference>
<dbReference type="PANTHER" id="PTHR20863">
    <property type="entry name" value="ACYL CARRIER PROTEIN"/>
    <property type="match status" value="1"/>
</dbReference>
<dbReference type="PANTHER" id="PTHR20863:SF62">
    <property type="entry name" value="ACYL CARRIER PROTEIN"/>
    <property type="match status" value="1"/>
</dbReference>
<dbReference type="Pfam" id="PF00550">
    <property type="entry name" value="PP-binding"/>
    <property type="match status" value="1"/>
</dbReference>
<dbReference type="SUPFAM" id="SSF47336">
    <property type="entry name" value="ACP-like"/>
    <property type="match status" value="1"/>
</dbReference>
<dbReference type="PROSITE" id="PS50075">
    <property type="entry name" value="CARRIER"/>
    <property type="match status" value="1"/>
</dbReference>
<gene>
    <name evidence="1" type="primary">acpP</name>
    <name type="synonym">acpP.2</name>
    <name type="ordered locus">SpyM3_1526</name>
</gene>
<name>ACP_STRP3</name>
<organism>
    <name type="scientific">Streptococcus pyogenes serotype M3 (strain ATCC BAA-595 / MGAS315)</name>
    <dbReference type="NCBI Taxonomy" id="198466"/>
    <lineage>
        <taxon>Bacteria</taxon>
        <taxon>Bacillati</taxon>
        <taxon>Bacillota</taxon>
        <taxon>Bacilli</taxon>
        <taxon>Lactobacillales</taxon>
        <taxon>Streptococcaceae</taxon>
        <taxon>Streptococcus</taxon>
    </lineage>
</organism>
<proteinExistence type="inferred from homology"/>
<keyword id="KW-0963">Cytoplasm</keyword>
<keyword id="KW-0275">Fatty acid biosynthesis</keyword>
<keyword id="KW-0276">Fatty acid metabolism</keyword>
<keyword id="KW-0444">Lipid biosynthesis</keyword>
<keyword id="KW-0443">Lipid metabolism</keyword>
<keyword id="KW-0596">Phosphopantetheine</keyword>
<keyword id="KW-0597">Phosphoprotein</keyword>
<reference key="1">
    <citation type="journal article" date="2002" name="Proc. Natl. Acad. Sci. U.S.A.">
        <title>Genome sequence of a serotype M3 strain of group A Streptococcus: phage-encoded toxins, the high-virulence phenotype, and clone emergence.</title>
        <authorList>
            <person name="Beres S.B."/>
            <person name="Sylva G.L."/>
            <person name="Barbian K.D."/>
            <person name="Lei B."/>
            <person name="Hoff J.S."/>
            <person name="Mammarella N.D."/>
            <person name="Liu M.-Y."/>
            <person name="Smoot J.C."/>
            <person name="Porcella S.F."/>
            <person name="Parkins L.D."/>
            <person name="Campbell D.S."/>
            <person name="Smith T.M."/>
            <person name="McCormick J.K."/>
            <person name="Leung D.Y.M."/>
            <person name="Schlievert P.M."/>
            <person name="Musser J.M."/>
        </authorList>
    </citation>
    <scope>NUCLEOTIDE SEQUENCE [LARGE SCALE GENOMIC DNA]</scope>
    <source>
        <strain>ATCC BAA-595 / MGAS315</strain>
    </source>
</reference>